<reference key="1">
    <citation type="submission" date="2006-11" db="EMBL/GenBank/DDBJ databases">
        <title>Sequence of Campylobacter fetus subsp. fetus 82-40.</title>
        <authorList>
            <person name="Fouts D.E."/>
            <person name="Nelson K.E."/>
        </authorList>
    </citation>
    <scope>NUCLEOTIDE SEQUENCE [LARGE SCALE GENOMIC DNA]</scope>
    <source>
        <strain>82-40</strain>
    </source>
</reference>
<name>MNMG_CAMFF</name>
<feature type="chain" id="PRO_0000345249" description="tRNA uridine 5-carboxymethylaminomethyl modification enzyme MnmG">
    <location>
        <begin position="1"/>
        <end position="621"/>
    </location>
</feature>
<feature type="binding site" evidence="1">
    <location>
        <begin position="9"/>
        <end position="14"/>
    </location>
    <ligand>
        <name>FAD</name>
        <dbReference type="ChEBI" id="CHEBI:57692"/>
    </ligand>
</feature>
<feature type="binding site" evidence="1">
    <location>
        <begin position="268"/>
        <end position="282"/>
    </location>
    <ligand>
        <name>NAD(+)</name>
        <dbReference type="ChEBI" id="CHEBI:57540"/>
    </ligand>
</feature>
<proteinExistence type="inferred from homology"/>
<evidence type="ECO:0000255" key="1">
    <source>
        <dbReference type="HAMAP-Rule" id="MF_00129"/>
    </source>
</evidence>
<sequence length="621" mass="69323">MNYDVIVVGGGHAGIEASLAAAKMGAKTLLITILAEQIGAASCNPAIGGLAKGHLVKEIDALGGQMGLTTDACGIQFRLLNESKGPAVRGSRAQIDMDRYRVYMRNLLLNTPNLEVTQEIATEILTKDNNIIGVKTHLDNNYGTKKLIITTGTFLNGLIHVGFNKLEAGRVGELSSKSLSASLKSLNLEMGRLKTGTCPRVLAKSIDFSVLERQDGDQDPTPFSFRTKEFNKTQLPCYIAYTNEKTHEIIRSNFDRAPLFTGQIEGIGPRYCPSIEDKINRFGDRERHHLFIEPQTREATEYYINGFSTSLPYDAQVEMLRSVKGFQNAKIVRHGYAIEYDYVSPTELKHTLETKKINGLYLAGQINGTTGYEEAAAQGLMAGINAALNLKTREPLILRRDESYIGVLIDDLVTKGTKEPYRMFTSRAEYRLLLREDNANLRLSKYGYNVGLLPKEAFEEMLKLKSNLEKGMEILLTKDMSPNKENLEFLASIDEDIINEKVPLQKIAARKSFTIEKLRKLNEFFLNLDDKSLNQILTEAKYYHYIAQQQIEVEKMKGLLDIKIPKSLEFKSISGLSNEVVEKLNKFAPPTLAAASNISGITPVAIDILHIAIKYHCQKTK</sequence>
<keyword id="KW-0963">Cytoplasm</keyword>
<keyword id="KW-0274">FAD</keyword>
<keyword id="KW-0285">Flavoprotein</keyword>
<keyword id="KW-0520">NAD</keyword>
<keyword id="KW-0819">tRNA processing</keyword>
<dbReference type="EMBL" id="CP000487">
    <property type="protein sequence ID" value="ABK82755.1"/>
    <property type="molecule type" value="Genomic_DNA"/>
</dbReference>
<dbReference type="RefSeq" id="WP_002850412.1">
    <property type="nucleotide sequence ID" value="NC_008599.1"/>
</dbReference>
<dbReference type="SMR" id="A0RQV2"/>
<dbReference type="GeneID" id="61065265"/>
<dbReference type="KEGG" id="cff:CFF8240_1446"/>
<dbReference type="eggNOG" id="COG0445">
    <property type="taxonomic scope" value="Bacteria"/>
</dbReference>
<dbReference type="HOGENOM" id="CLU_007831_2_2_7"/>
<dbReference type="Proteomes" id="UP000000760">
    <property type="component" value="Chromosome"/>
</dbReference>
<dbReference type="GO" id="GO:0005829">
    <property type="term" value="C:cytosol"/>
    <property type="evidence" value="ECO:0007669"/>
    <property type="project" value="TreeGrafter"/>
</dbReference>
<dbReference type="GO" id="GO:0050660">
    <property type="term" value="F:flavin adenine dinucleotide binding"/>
    <property type="evidence" value="ECO:0007669"/>
    <property type="project" value="UniProtKB-UniRule"/>
</dbReference>
<dbReference type="GO" id="GO:0030488">
    <property type="term" value="P:tRNA methylation"/>
    <property type="evidence" value="ECO:0007669"/>
    <property type="project" value="TreeGrafter"/>
</dbReference>
<dbReference type="GO" id="GO:0002098">
    <property type="term" value="P:tRNA wobble uridine modification"/>
    <property type="evidence" value="ECO:0007669"/>
    <property type="project" value="InterPro"/>
</dbReference>
<dbReference type="FunFam" id="1.10.150.570:FF:000001">
    <property type="entry name" value="tRNA uridine 5-carboxymethylaminomethyl modification enzyme MnmG"/>
    <property type="match status" value="1"/>
</dbReference>
<dbReference type="FunFam" id="3.50.50.60:FF:000002">
    <property type="entry name" value="tRNA uridine 5-carboxymethylaminomethyl modification enzyme MnmG"/>
    <property type="match status" value="1"/>
</dbReference>
<dbReference type="Gene3D" id="3.50.50.60">
    <property type="entry name" value="FAD/NAD(P)-binding domain"/>
    <property type="match status" value="2"/>
</dbReference>
<dbReference type="Gene3D" id="1.10.150.570">
    <property type="entry name" value="GidA associated domain, C-terminal subdomain"/>
    <property type="match status" value="1"/>
</dbReference>
<dbReference type="Gene3D" id="1.10.10.1800">
    <property type="entry name" value="tRNA uridine 5-carboxymethylaminomethyl modification enzyme MnmG/GidA"/>
    <property type="match status" value="1"/>
</dbReference>
<dbReference type="HAMAP" id="MF_00129">
    <property type="entry name" value="MnmG_GidA"/>
    <property type="match status" value="1"/>
</dbReference>
<dbReference type="InterPro" id="IPR036188">
    <property type="entry name" value="FAD/NAD-bd_sf"/>
</dbReference>
<dbReference type="InterPro" id="IPR049312">
    <property type="entry name" value="GIDA_C_N"/>
</dbReference>
<dbReference type="InterPro" id="IPR004416">
    <property type="entry name" value="MnmG"/>
</dbReference>
<dbReference type="InterPro" id="IPR002218">
    <property type="entry name" value="MnmG-rel"/>
</dbReference>
<dbReference type="InterPro" id="IPR020595">
    <property type="entry name" value="MnmG-rel_CS"/>
</dbReference>
<dbReference type="InterPro" id="IPR026904">
    <property type="entry name" value="MnmG_C"/>
</dbReference>
<dbReference type="InterPro" id="IPR047001">
    <property type="entry name" value="MnmG_C_subdom"/>
</dbReference>
<dbReference type="InterPro" id="IPR044920">
    <property type="entry name" value="MnmG_C_subdom_sf"/>
</dbReference>
<dbReference type="InterPro" id="IPR040131">
    <property type="entry name" value="MnmG_N"/>
</dbReference>
<dbReference type="NCBIfam" id="TIGR00136">
    <property type="entry name" value="mnmG_gidA"/>
    <property type="match status" value="1"/>
</dbReference>
<dbReference type="PANTHER" id="PTHR11806">
    <property type="entry name" value="GLUCOSE INHIBITED DIVISION PROTEIN A"/>
    <property type="match status" value="1"/>
</dbReference>
<dbReference type="PANTHER" id="PTHR11806:SF0">
    <property type="entry name" value="PROTEIN MTO1 HOMOLOG, MITOCHONDRIAL"/>
    <property type="match status" value="1"/>
</dbReference>
<dbReference type="Pfam" id="PF01134">
    <property type="entry name" value="GIDA"/>
    <property type="match status" value="1"/>
</dbReference>
<dbReference type="Pfam" id="PF21680">
    <property type="entry name" value="GIDA_C_1st"/>
    <property type="match status" value="1"/>
</dbReference>
<dbReference type="Pfam" id="PF13932">
    <property type="entry name" value="SAM_GIDA_C"/>
    <property type="match status" value="1"/>
</dbReference>
<dbReference type="PRINTS" id="PR00411">
    <property type="entry name" value="PNDRDTASEI"/>
</dbReference>
<dbReference type="SMART" id="SM01228">
    <property type="entry name" value="GIDA_assoc_3"/>
    <property type="match status" value="1"/>
</dbReference>
<dbReference type="SUPFAM" id="SSF51905">
    <property type="entry name" value="FAD/NAD(P)-binding domain"/>
    <property type="match status" value="1"/>
</dbReference>
<dbReference type="PROSITE" id="PS01280">
    <property type="entry name" value="GIDA_1"/>
    <property type="match status" value="1"/>
</dbReference>
<dbReference type="PROSITE" id="PS01281">
    <property type="entry name" value="GIDA_2"/>
    <property type="match status" value="1"/>
</dbReference>
<accession>A0RQV2</accession>
<protein>
    <recommendedName>
        <fullName evidence="1">tRNA uridine 5-carboxymethylaminomethyl modification enzyme MnmG</fullName>
    </recommendedName>
    <alternativeName>
        <fullName evidence="1">Glucose-inhibited division protein A</fullName>
    </alternativeName>
</protein>
<organism>
    <name type="scientific">Campylobacter fetus subsp. fetus (strain 82-40)</name>
    <dbReference type="NCBI Taxonomy" id="360106"/>
    <lineage>
        <taxon>Bacteria</taxon>
        <taxon>Pseudomonadati</taxon>
        <taxon>Campylobacterota</taxon>
        <taxon>Epsilonproteobacteria</taxon>
        <taxon>Campylobacterales</taxon>
        <taxon>Campylobacteraceae</taxon>
        <taxon>Campylobacter</taxon>
    </lineage>
</organism>
<gene>
    <name evidence="1" type="primary">mnmG</name>
    <name evidence="1" type="synonym">gidA</name>
    <name type="ordered locus">CFF8240_1446</name>
</gene>
<comment type="function">
    <text evidence="1">NAD-binding protein involved in the addition of a carboxymethylaminomethyl (cmnm) group at the wobble position (U34) of certain tRNAs, forming tRNA-cmnm(5)s(2)U34.</text>
</comment>
<comment type="cofactor">
    <cofactor evidence="1">
        <name>FAD</name>
        <dbReference type="ChEBI" id="CHEBI:57692"/>
    </cofactor>
</comment>
<comment type="subunit">
    <text evidence="1">Homodimer. Heterotetramer of two MnmE and two MnmG subunits.</text>
</comment>
<comment type="subcellular location">
    <subcellularLocation>
        <location evidence="1">Cytoplasm</location>
    </subcellularLocation>
</comment>
<comment type="similarity">
    <text evidence="1">Belongs to the MnmG family.</text>
</comment>